<name>PYRF_METPB</name>
<reference key="1">
    <citation type="submission" date="2008-04" db="EMBL/GenBank/DDBJ databases">
        <title>Complete sequence of chromosome of Methylobacterium populi BJ001.</title>
        <authorList>
            <consortium name="US DOE Joint Genome Institute"/>
            <person name="Copeland A."/>
            <person name="Lucas S."/>
            <person name="Lapidus A."/>
            <person name="Glavina del Rio T."/>
            <person name="Dalin E."/>
            <person name="Tice H."/>
            <person name="Bruce D."/>
            <person name="Goodwin L."/>
            <person name="Pitluck S."/>
            <person name="Chertkov O."/>
            <person name="Brettin T."/>
            <person name="Detter J.C."/>
            <person name="Han C."/>
            <person name="Kuske C.R."/>
            <person name="Schmutz J."/>
            <person name="Larimer F."/>
            <person name="Land M."/>
            <person name="Hauser L."/>
            <person name="Kyrpides N."/>
            <person name="Mikhailova N."/>
            <person name="Marx C."/>
            <person name="Richardson P."/>
        </authorList>
    </citation>
    <scope>NUCLEOTIDE SEQUENCE [LARGE SCALE GENOMIC DNA]</scope>
    <source>
        <strain>ATCC BAA-705 / NCIMB 13946 / BJ001</strain>
    </source>
</reference>
<feature type="chain" id="PRO_1000138541" description="Orotidine 5'-phosphate decarboxylase">
    <location>
        <begin position="1"/>
        <end position="232"/>
    </location>
</feature>
<feature type="active site" description="Proton donor" evidence="1">
    <location>
        <position position="67"/>
    </location>
</feature>
<feature type="binding site" evidence="1">
    <location>
        <position position="16"/>
    </location>
    <ligand>
        <name>substrate</name>
    </ligand>
</feature>
<feature type="binding site" evidence="1">
    <location>
        <position position="38"/>
    </location>
    <ligand>
        <name>substrate</name>
    </ligand>
</feature>
<feature type="binding site" evidence="1">
    <location>
        <begin position="65"/>
        <end position="74"/>
    </location>
    <ligand>
        <name>substrate</name>
    </ligand>
</feature>
<feature type="binding site" evidence="1">
    <location>
        <position position="119"/>
    </location>
    <ligand>
        <name>substrate</name>
    </ligand>
</feature>
<feature type="binding site" evidence="1">
    <location>
        <position position="180"/>
    </location>
    <ligand>
        <name>substrate</name>
    </ligand>
</feature>
<feature type="binding site" evidence="1">
    <location>
        <position position="189"/>
    </location>
    <ligand>
        <name>substrate</name>
    </ligand>
</feature>
<feature type="binding site" evidence="1">
    <location>
        <position position="209"/>
    </location>
    <ligand>
        <name>substrate</name>
    </ligand>
</feature>
<feature type="binding site" evidence="1">
    <location>
        <position position="210"/>
    </location>
    <ligand>
        <name>substrate</name>
    </ligand>
</feature>
<dbReference type="EC" id="4.1.1.23" evidence="1"/>
<dbReference type="EMBL" id="CP001029">
    <property type="protein sequence ID" value="ACB79684.1"/>
    <property type="molecule type" value="Genomic_DNA"/>
</dbReference>
<dbReference type="RefSeq" id="WP_012453432.1">
    <property type="nucleotide sequence ID" value="NC_010725.1"/>
</dbReference>
<dbReference type="SMR" id="B1ZFB1"/>
<dbReference type="STRING" id="441620.Mpop_1518"/>
<dbReference type="KEGG" id="mpo:Mpop_1518"/>
<dbReference type="eggNOG" id="COG0284">
    <property type="taxonomic scope" value="Bacteria"/>
</dbReference>
<dbReference type="HOGENOM" id="CLU_067069_1_0_5"/>
<dbReference type="OrthoDB" id="9806203at2"/>
<dbReference type="UniPathway" id="UPA00070">
    <property type="reaction ID" value="UER00120"/>
</dbReference>
<dbReference type="Proteomes" id="UP000007136">
    <property type="component" value="Chromosome"/>
</dbReference>
<dbReference type="GO" id="GO:0005829">
    <property type="term" value="C:cytosol"/>
    <property type="evidence" value="ECO:0007669"/>
    <property type="project" value="TreeGrafter"/>
</dbReference>
<dbReference type="GO" id="GO:0004590">
    <property type="term" value="F:orotidine-5'-phosphate decarboxylase activity"/>
    <property type="evidence" value="ECO:0007669"/>
    <property type="project" value="UniProtKB-UniRule"/>
</dbReference>
<dbReference type="GO" id="GO:0006207">
    <property type="term" value="P:'de novo' pyrimidine nucleobase biosynthetic process"/>
    <property type="evidence" value="ECO:0007669"/>
    <property type="project" value="InterPro"/>
</dbReference>
<dbReference type="GO" id="GO:0044205">
    <property type="term" value="P:'de novo' UMP biosynthetic process"/>
    <property type="evidence" value="ECO:0007669"/>
    <property type="project" value="UniProtKB-UniRule"/>
</dbReference>
<dbReference type="CDD" id="cd04725">
    <property type="entry name" value="OMP_decarboxylase_like"/>
    <property type="match status" value="1"/>
</dbReference>
<dbReference type="Gene3D" id="3.20.20.70">
    <property type="entry name" value="Aldolase class I"/>
    <property type="match status" value="1"/>
</dbReference>
<dbReference type="HAMAP" id="MF_01200_B">
    <property type="entry name" value="OMPdecase_type1_B"/>
    <property type="match status" value="1"/>
</dbReference>
<dbReference type="InterPro" id="IPR013785">
    <property type="entry name" value="Aldolase_TIM"/>
</dbReference>
<dbReference type="InterPro" id="IPR014732">
    <property type="entry name" value="OMPdecase"/>
</dbReference>
<dbReference type="InterPro" id="IPR018089">
    <property type="entry name" value="OMPdecase_AS"/>
</dbReference>
<dbReference type="InterPro" id="IPR047596">
    <property type="entry name" value="OMPdecase_bac"/>
</dbReference>
<dbReference type="InterPro" id="IPR001754">
    <property type="entry name" value="OMPdeCOase_dom"/>
</dbReference>
<dbReference type="InterPro" id="IPR011060">
    <property type="entry name" value="RibuloseP-bd_barrel"/>
</dbReference>
<dbReference type="NCBIfam" id="NF001273">
    <property type="entry name" value="PRK00230.1"/>
    <property type="match status" value="1"/>
</dbReference>
<dbReference type="NCBIfam" id="TIGR01740">
    <property type="entry name" value="pyrF"/>
    <property type="match status" value="1"/>
</dbReference>
<dbReference type="PANTHER" id="PTHR32119">
    <property type="entry name" value="OROTIDINE 5'-PHOSPHATE DECARBOXYLASE"/>
    <property type="match status" value="1"/>
</dbReference>
<dbReference type="PANTHER" id="PTHR32119:SF2">
    <property type="entry name" value="OROTIDINE 5'-PHOSPHATE DECARBOXYLASE"/>
    <property type="match status" value="1"/>
</dbReference>
<dbReference type="Pfam" id="PF00215">
    <property type="entry name" value="OMPdecase"/>
    <property type="match status" value="1"/>
</dbReference>
<dbReference type="SMART" id="SM00934">
    <property type="entry name" value="OMPdecase"/>
    <property type="match status" value="1"/>
</dbReference>
<dbReference type="SUPFAM" id="SSF51366">
    <property type="entry name" value="Ribulose-phoshate binding barrel"/>
    <property type="match status" value="1"/>
</dbReference>
<dbReference type="PROSITE" id="PS00156">
    <property type="entry name" value="OMPDECASE"/>
    <property type="match status" value="1"/>
</dbReference>
<evidence type="ECO:0000255" key="1">
    <source>
        <dbReference type="HAMAP-Rule" id="MF_01200"/>
    </source>
</evidence>
<organism>
    <name type="scientific">Methylorubrum populi (strain ATCC BAA-705 / NCIMB 13946 / BJ001)</name>
    <name type="common">Methylobacterium populi</name>
    <dbReference type="NCBI Taxonomy" id="441620"/>
    <lineage>
        <taxon>Bacteria</taxon>
        <taxon>Pseudomonadati</taxon>
        <taxon>Pseudomonadota</taxon>
        <taxon>Alphaproteobacteria</taxon>
        <taxon>Hyphomicrobiales</taxon>
        <taxon>Methylobacteriaceae</taxon>
        <taxon>Methylorubrum</taxon>
    </lineage>
</organism>
<sequence>MPESADPRDRLIVALDLPDVAAAERLVARIGDAATFYKIGYRLAYAGGLDFAARLAREGKKTFLDLKLHDIGNTVEEGVRSASALGATFLTVHAYPQTMRAAVRGRGPGLKILAVTVLTSYDDADAAEAGYALPVADLVAQRASQAAAIGIDGIVCAAAEAGAVRGRIGPSGLIVTPGIRPAGAEAGDQKRVMTPGQARAAGIDHVVVGRPITGAGDPRAVARTIVAEMENV</sequence>
<gene>
    <name evidence="1" type="primary">pyrF</name>
    <name type="ordered locus">Mpop_1518</name>
</gene>
<accession>B1ZFB1</accession>
<protein>
    <recommendedName>
        <fullName evidence="1">Orotidine 5'-phosphate decarboxylase</fullName>
        <ecNumber evidence="1">4.1.1.23</ecNumber>
    </recommendedName>
    <alternativeName>
        <fullName evidence="1">OMP decarboxylase</fullName>
        <shortName evidence="1">OMPDCase</shortName>
        <shortName evidence="1">OMPdecase</shortName>
    </alternativeName>
</protein>
<comment type="function">
    <text evidence="1">Catalyzes the decarboxylation of orotidine 5'-monophosphate (OMP) to uridine 5'-monophosphate (UMP).</text>
</comment>
<comment type="catalytic activity">
    <reaction evidence="1">
        <text>orotidine 5'-phosphate + H(+) = UMP + CO2</text>
        <dbReference type="Rhea" id="RHEA:11596"/>
        <dbReference type="ChEBI" id="CHEBI:15378"/>
        <dbReference type="ChEBI" id="CHEBI:16526"/>
        <dbReference type="ChEBI" id="CHEBI:57538"/>
        <dbReference type="ChEBI" id="CHEBI:57865"/>
        <dbReference type="EC" id="4.1.1.23"/>
    </reaction>
</comment>
<comment type="pathway">
    <text evidence="1">Pyrimidine metabolism; UMP biosynthesis via de novo pathway; UMP from orotate: step 2/2.</text>
</comment>
<comment type="subunit">
    <text evidence="1">Homodimer.</text>
</comment>
<comment type="similarity">
    <text evidence="1">Belongs to the OMP decarboxylase family. Type 1 subfamily.</text>
</comment>
<proteinExistence type="inferred from homology"/>
<keyword id="KW-0210">Decarboxylase</keyword>
<keyword id="KW-0456">Lyase</keyword>
<keyword id="KW-0665">Pyrimidine biosynthesis</keyword>